<dbReference type="EC" id="1.97.1.12" evidence="2"/>
<dbReference type="EMBL" id="AY936348">
    <property type="protein sequence ID" value="AAY58022.1"/>
    <property type="molecule type" value="Genomic_DNA"/>
</dbReference>
<dbReference type="SMR" id="Q49CB2"/>
<dbReference type="GO" id="GO:0009535">
    <property type="term" value="C:chloroplast thylakoid membrane"/>
    <property type="evidence" value="ECO:0007669"/>
    <property type="project" value="TreeGrafter"/>
</dbReference>
<dbReference type="GO" id="GO:0009522">
    <property type="term" value="C:photosystem I"/>
    <property type="evidence" value="ECO:0007669"/>
    <property type="project" value="UniProtKB-KW"/>
</dbReference>
<dbReference type="GO" id="GO:0051539">
    <property type="term" value="F:4 iron, 4 sulfur cluster binding"/>
    <property type="evidence" value="ECO:0007669"/>
    <property type="project" value="UniProtKB-KW"/>
</dbReference>
<dbReference type="GO" id="GO:0016168">
    <property type="term" value="F:chlorophyll binding"/>
    <property type="evidence" value="ECO:0007669"/>
    <property type="project" value="UniProtKB-KW"/>
</dbReference>
<dbReference type="GO" id="GO:0009055">
    <property type="term" value="F:electron transfer activity"/>
    <property type="evidence" value="ECO:0007669"/>
    <property type="project" value="UniProtKB-UniRule"/>
</dbReference>
<dbReference type="GO" id="GO:0000287">
    <property type="term" value="F:magnesium ion binding"/>
    <property type="evidence" value="ECO:0007669"/>
    <property type="project" value="UniProtKB-UniRule"/>
</dbReference>
<dbReference type="GO" id="GO:0016491">
    <property type="term" value="F:oxidoreductase activity"/>
    <property type="evidence" value="ECO:0007669"/>
    <property type="project" value="UniProtKB-KW"/>
</dbReference>
<dbReference type="GO" id="GO:0015979">
    <property type="term" value="P:photosynthesis"/>
    <property type="evidence" value="ECO:0007669"/>
    <property type="project" value="UniProtKB-UniRule"/>
</dbReference>
<dbReference type="FunFam" id="1.20.1130.10:FF:000001">
    <property type="entry name" value="Photosystem I P700 chlorophyll a apoprotein A2"/>
    <property type="match status" value="1"/>
</dbReference>
<dbReference type="Gene3D" id="1.20.1130.10">
    <property type="entry name" value="Photosystem I PsaA/PsaB"/>
    <property type="match status" value="1"/>
</dbReference>
<dbReference type="HAMAP" id="MF_00482">
    <property type="entry name" value="PSI_PsaB"/>
    <property type="match status" value="1"/>
</dbReference>
<dbReference type="InterPro" id="IPR001280">
    <property type="entry name" value="PSI_PsaA/B"/>
</dbReference>
<dbReference type="InterPro" id="IPR020586">
    <property type="entry name" value="PSI_PsaA/B_CS"/>
</dbReference>
<dbReference type="InterPro" id="IPR036408">
    <property type="entry name" value="PSI_PsaA/B_sf"/>
</dbReference>
<dbReference type="InterPro" id="IPR006244">
    <property type="entry name" value="PSI_PsaB"/>
</dbReference>
<dbReference type="NCBIfam" id="TIGR01336">
    <property type="entry name" value="psaB"/>
    <property type="match status" value="1"/>
</dbReference>
<dbReference type="PANTHER" id="PTHR30128">
    <property type="entry name" value="OUTER MEMBRANE PROTEIN, OMPA-RELATED"/>
    <property type="match status" value="1"/>
</dbReference>
<dbReference type="PANTHER" id="PTHR30128:SF19">
    <property type="entry name" value="PHOTOSYSTEM I P700 CHLOROPHYLL A APOPROTEIN A1-RELATED"/>
    <property type="match status" value="1"/>
</dbReference>
<dbReference type="Pfam" id="PF00223">
    <property type="entry name" value="PsaA_PsaB"/>
    <property type="match status" value="1"/>
</dbReference>
<dbReference type="PIRSF" id="PIRSF002905">
    <property type="entry name" value="PSI_A"/>
    <property type="match status" value="1"/>
</dbReference>
<dbReference type="PRINTS" id="PR00257">
    <property type="entry name" value="PHOTSYSPSAAB"/>
</dbReference>
<dbReference type="SUPFAM" id="SSF81558">
    <property type="entry name" value="Photosystem I subunits PsaA/PsaB"/>
    <property type="match status" value="1"/>
</dbReference>
<dbReference type="PROSITE" id="PS00419">
    <property type="entry name" value="PHOTOSYSTEM_I_PSAAB"/>
    <property type="match status" value="1"/>
</dbReference>
<keyword id="KW-0004">4Fe-4S</keyword>
<keyword id="KW-0148">Chlorophyll</keyword>
<keyword id="KW-0157">Chromophore</keyword>
<keyword id="KW-0249">Electron transport</keyword>
<keyword id="KW-0408">Iron</keyword>
<keyword id="KW-0411">Iron-sulfur</keyword>
<keyword id="KW-0460">Magnesium</keyword>
<keyword id="KW-0472">Membrane</keyword>
<keyword id="KW-0479">Metal-binding</keyword>
<keyword id="KW-0560">Oxidoreductase</keyword>
<keyword id="KW-0602">Photosynthesis</keyword>
<keyword id="KW-0603">Photosystem I</keyword>
<keyword id="KW-0934">Plastid</keyword>
<keyword id="KW-0812">Transmembrane</keyword>
<keyword id="KW-1133">Transmembrane helix</keyword>
<keyword id="KW-0813">Transport</keyword>
<evidence type="ECO:0000250" key="1"/>
<evidence type="ECO:0000255" key="2">
    <source>
        <dbReference type="HAMAP-Rule" id="MF_00482"/>
    </source>
</evidence>
<evidence type="ECO:0000305" key="3"/>
<reference key="1">
    <citation type="journal article" date="2005" name="J. Mol. Evol.">
        <title>Down the slippery slope: plastid genome evolution in Convolvulaceae.</title>
        <authorList>
            <person name="Stefanovic S."/>
            <person name="Olmstead R.G."/>
        </authorList>
    </citation>
    <scope>NUCLEOTIDE SEQUENCE [GENOMIC DNA]</scope>
</reference>
<geneLocation type="plastid"/>
<feature type="chain" id="PRO_0000300041" description="Photosystem I P700 chlorophyll a apoprotein A2">
    <location>
        <begin position="1"/>
        <end position="734"/>
    </location>
</feature>
<feature type="transmembrane region" description="Helical; Name=I" evidence="2">
    <location>
        <begin position="46"/>
        <end position="69"/>
    </location>
</feature>
<feature type="transmembrane region" description="Helical; Name=II" evidence="2">
    <location>
        <begin position="135"/>
        <end position="158"/>
    </location>
</feature>
<feature type="transmembrane region" description="Helical; Name=III" evidence="2">
    <location>
        <begin position="175"/>
        <end position="199"/>
    </location>
</feature>
<feature type="transmembrane region" description="Helical; Name=IV" evidence="2">
    <location>
        <begin position="273"/>
        <end position="291"/>
    </location>
</feature>
<feature type="transmembrane region" description="Helical; Name=V" evidence="2">
    <location>
        <begin position="330"/>
        <end position="353"/>
    </location>
</feature>
<feature type="transmembrane region" description="Helical; Name=VI" evidence="2">
    <location>
        <begin position="369"/>
        <end position="395"/>
    </location>
</feature>
<feature type="transmembrane region" description="Helical; Name=VII" evidence="2">
    <location>
        <begin position="417"/>
        <end position="439"/>
    </location>
</feature>
<feature type="transmembrane region" description="Helical; Name=VIII" evidence="2">
    <location>
        <begin position="517"/>
        <end position="535"/>
    </location>
</feature>
<feature type="transmembrane region" description="Helical; Name=IX" evidence="2">
    <location>
        <begin position="575"/>
        <end position="596"/>
    </location>
</feature>
<feature type="transmembrane region" description="Helical; Name=X" evidence="2">
    <location>
        <begin position="643"/>
        <end position="665"/>
    </location>
</feature>
<feature type="transmembrane region" description="Helical; Name=XI" evidence="2">
    <location>
        <begin position="707"/>
        <end position="727"/>
    </location>
</feature>
<feature type="binding site" evidence="2">
    <location>
        <position position="559"/>
    </location>
    <ligand>
        <name>[4Fe-4S] cluster</name>
        <dbReference type="ChEBI" id="CHEBI:49883"/>
        <note>ligand shared between dimeric partners</note>
    </ligand>
</feature>
<feature type="binding site" evidence="2">
    <location>
        <position position="568"/>
    </location>
    <ligand>
        <name>[4Fe-4S] cluster</name>
        <dbReference type="ChEBI" id="CHEBI:49883"/>
        <note>ligand shared between dimeric partners</note>
    </ligand>
</feature>
<feature type="binding site" description="axial binding residue" evidence="2">
    <location>
        <position position="654"/>
    </location>
    <ligand>
        <name>chlorophyll a</name>
        <dbReference type="ChEBI" id="CHEBI:58416"/>
        <label>B1</label>
    </ligand>
    <ligandPart>
        <name>Mg</name>
        <dbReference type="ChEBI" id="CHEBI:25107"/>
    </ligandPart>
</feature>
<feature type="binding site" description="axial binding residue" evidence="2">
    <location>
        <position position="662"/>
    </location>
    <ligand>
        <name>chlorophyll a</name>
        <dbReference type="ChEBI" id="CHEBI:58416"/>
        <label>B3</label>
    </ligand>
    <ligandPart>
        <name>Mg</name>
        <dbReference type="ChEBI" id="CHEBI:25107"/>
    </ligandPart>
</feature>
<feature type="binding site" evidence="2">
    <location>
        <position position="670"/>
    </location>
    <ligand>
        <name>chlorophyll a</name>
        <dbReference type="ChEBI" id="CHEBI:58416"/>
        <label>B3</label>
    </ligand>
</feature>
<feature type="binding site" evidence="2">
    <location>
        <position position="671"/>
    </location>
    <ligand>
        <name>phylloquinone</name>
        <dbReference type="ChEBI" id="CHEBI:18067"/>
        <label>B</label>
    </ligand>
</feature>
<sequence>MVLRFPKFSQSLAQDPTTRRIWFGIATAHDFESHNEITEERLYQNIFASHFGQLAIIFLWTSGNLFHVAWEGNFESWVQDPLHVRPIAHAIWDPHFGQPAVETFTRGGAVDPVNIAYSGVYQWWYTIGLRTKEDLYTGALFLFLISAISLIAGWLHLQPKWKPNIAWFKNAESRLNHHLAGLFGVSSLAWTGHLVHVAIPASRGEYVRWNNLLDQLPHPQGLGPLFTGQWNLYAQNPDSSSHCFGTSQGAGTAILTFLGGFHPETQSLWLTDIAHHHLAITLLFFVAGHMYRTNFGIGHSLKNLLDAHIPPGGRLGRGHQGLYDTLNNSLHFQLGLALASLGVFTSLVAQHMYSLPSYAFIAQDFTTQAALYAHHQYIAGFIMTGAFAHGAIFFIRDYNPEQNKDNVLARILDHKQAIISHLSWVSLFLGFHTLGLYIHNDVMLAFGTPEKQILIEPIFAQWIQSAHGKTSYGFDVLLSSTNGPAVNAGQHLWLPEWLKAVNDTSNSLFLTIGPGDFLVHHAIALGLHTTTLILVKGALDARGSTLMPDKKEFGYSFPCDGPGRGGTCDISAWDAFYLAVFWMLNTIGWVTFYWHWKHLTLWQDNVSQFNESSTYLMGWLRDYLWLNSSQLINGYNPFGMNSLSVWAWMFLFGHLVWATGFMFLISWRGYWQELIETLVWAHERTPLANLIHWRDKPVALSIVQARFVGLAHFSVGYIFTYAAFLIASTSGKFG</sequence>
<protein>
    <recommendedName>
        <fullName evidence="2">Photosystem I P700 chlorophyll a apoprotein A2</fullName>
        <ecNumber evidence="2">1.97.1.12</ecNumber>
    </recommendedName>
    <alternativeName>
        <fullName evidence="2">PSI-B</fullName>
    </alternativeName>
    <alternativeName>
        <fullName evidence="2">PsaB</fullName>
    </alternativeName>
</protein>
<comment type="function">
    <text evidence="2">PsaA and PsaB bind P700, the primary electron donor of photosystem I (PSI), as well as the electron acceptors A0, A1 and FX. PSI is a plastocyanin-ferredoxin oxidoreductase, converting photonic excitation into a charge separation, which transfers an electron from the donor P700 chlorophyll pair to the spectroscopically characterized acceptors A0, A1, FX, FA and FB in turn. Oxidized P700 is reduced on the lumenal side of the thylakoid membrane by plastocyanin.</text>
</comment>
<comment type="catalytic activity">
    <reaction evidence="2">
        <text>reduced [plastocyanin] + hnu + oxidized [2Fe-2S]-[ferredoxin] = oxidized [plastocyanin] + reduced [2Fe-2S]-[ferredoxin]</text>
        <dbReference type="Rhea" id="RHEA:30407"/>
        <dbReference type="Rhea" id="RHEA-COMP:10000"/>
        <dbReference type="Rhea" id="RHEA-COMP:10001"/>
        <dbReference type="Rhea" id="RHEA-COMP:10039"/>
        <dbReference type="Rhea" id="RHEA-COMP:10040"/>
        <dbReference type="ChEBI" id="CHEBI:29036"/>
        <dbReference type="ChEBI" id="CHEBI:30212"/>
        <dbReference type="ChEBI" id="CHEBI:33737"/>
        <dbReference type="ChEBI" id="CHEBI:33738"/>
        <dbReference type="ChEBI" id="CHEBI:49552"/>
        <dbReference type="EC" id="1.97.1.12"/>
    </reaction>
</comment>
<comment type="cofactor">
    <text evidence="2">P700 is a chlorophyll a/chlorophyll a' dimer, A0 is one or more chlorophyll a, A1 is one or both phylloquinones and FX is a shared 4Fe-4S iron-sulfur center.</text>
</comment>
<comment type="subunit">
    <text evidence="2">The PsaA/B heterodimer binds the P700 chlorophyll special pair and subsequent electron acceptors. PSI consists of a core antenna complex that captures photons, and an electron transfer chain that converts photonic excitation into a charge separation. The eukaryotic PSI reaction center is composed of at least 11 subunits.</text>
</comment>
<comment type="subcellular location">
    <subcellularLocation>
        <location evidence="1">Plastid membrane</location>
        <topology evidence="2">Multi-pass membrane protein</topology>
    </subcellularLocation>
</comment>
<comment type="similarity">
    <text evidence="2">Belongs to the PsaA/PsaB family.</text>
</comment>
<comment type="caution">
    <text evidence="3">This organism being probably non-photosynthetic, the role of this protein is uncertain.</text>
</comment>
<proteinExistence type="inferred from homology"/>
<organism>
    <name type="scientific">Cuscuta sandwichiana</name>
    <name type="common">Kauna'oa</name>
    <dbReference type="NCBI Taxonomy" id="197374"/>
    <lineage>
        <taxon>Eukaryota</taxon>
        <taxon>Viridiplantae</taxon>
        <taxon>Streptophyta</taxon>
        <taxon>Embryophyta</taxon>
        <taxon>Tracheophyta</taxon>
        <taxon>Spermatophyta</taxon>
        <taxon>Magnoliopsida</taxon>
        <taxon>eudicotyledons</taxon>
        <taxon>Gunneridae</taxon>
        <taxon>Pentapetalae</taxon>
        <taxon>asterids</taxon>
        <taxon>lamiids</taxon>
        <taxon>Solanales</taxon>
        <taxon>Convolvulaceae</taxon>
        <taxon>Cuscuteae</taxon>
        <taxon>Cuscuta</taxon>
        <taxon>Cuscuta subgen. Grammica</taxon>
        <taxon>Cuscuta sect. Cleistogrammica</taxon>
    </lineage>
</organism>
<gene>
    <name evidence="2" type="primary">psaB</name>
</gene>
<name>PSAB_CUSSA</name>
<accession>Q49CB2</accession>